<dbReference type="EMBL" id="CP001399">
    <property type="protein sequence ID" value="ACP35499.1"/>
    <property type="molecule type" value="Genomic_DNA"/>
</dbReference>
<dbReference type="RefSeq" id="WP_012711394.1">
    <property type="nucleotide sequence ID" value="NC_012589.1"/>
</dbReference>
<dbReference type="SMR" id="C3MQ36"/>
<dbReference type="KEGG" id="sis:LS215_1491"/>
<dbReference type="HOGENOM" id="CLU_062507_1_0_2"/>
<dbReference type="OrthoDB" id="30639at2157"/>
<dbReference type="Proteomes" id="UP000001747">
    <property type="component" value="Chromosome"/>
</dbReference>
<dbReference type="GO" id="GO:1990904">
    <property type="term" value="C:ribonucleoprotein complex"/>
    <property type="evidence" value="ECO:0007669"/>
    <property type="project" value="UniProtKB-KW"/>
</dbReference>
<dbReference type="GO" id="GO:0005840">
    <property type="term" value="C:ribosome"/>
    <property type="evidence" value="ECO:0007669"/>
    <property type="project" value="UniProtKB-KW"/>
</dbReference>
<dbReference type="GO" id="GO:0003735">
    <property type="term" value="F:structural constituent of ribosome"/>
    <property type="evidence" value="ECO:0007669"/>
    <property type="project" value="InterPro"/>
</dbReference>
<dbReference type="GO" id="GO:0006412">
    <property type="term" value="P:translation"/>
    <property type="evidence" value="ECO:0007669"/>
    <property type="project" value="UniProtKB-UniRule"/>
</dbReference>
<dbReference type="HAMAP" id="MF_00359">
    <property type="entry name" value="Ribosomal_eS1"/>
    <property type="match status" value="1"/>
</dbReference>
<dbReference type="InterPro" id="IPR001593">
    <property type="entry name" value="Ribosomal_eS1"/>
</dbReference>
<dbReference type="InterPro" id="IPR030838">
    <property type="entry name" value="Ribosomal_eS1_arc"/>
</dbReference>
<dbReference type="NCBIfam" id="NF003142">
    <property type="entry name" value="PRK04057.1"/>
    <property type="match status" value="1"/>
</dbReference>
<dbReference type="PANTHER" id="PTHR11830">
    <property type="entry name" value="40S RIBOSOMAL PROTEIN S3A"/>
    <property type="match status" value="1"/>
</dbReference>
<dbReference type="Pfam" id="PF01015">
    <property type="entry name" value="Ribosomal_S3Ae"/>
    <property type="match status" value="1"/>
</dbReference>
<dbReference type="SMART" id="SM01397">
    <property type="entry name" value="Ribosomal_S3Ae"/>
    <property type="match status" value="1"/>
</dbReference>
<organism>
    <name type="scientific">Saccharolobus islandicus (strain L.S.2.15 / Lassen #1)</name>
    <name type="common">Sulfolobus islandicus</name>
    <dbReference type="NCBI Taxonomy" id="429572"/>
    <lineage>
        <taxon>Archaea</taxon>
        <taxon>Thermoproteota</taxon>
        <taxon>Thermoprotei</taxon>
        <taxon>Sulfolobales</taxon>
        <taxon>Sulfolobaceae</taxon>
        <taxon>Saccharolobus</taxon>
    </lineage>
</organism>
<name>RS3A_SACI2</name>
<proteinExistence type="inferred from homology"/>
<keyword id="KW-0687">Ribonucleoprotein</keyword>
<keyword id="KW-0689">Ribosomal protein</keyword>
<sequence>MSAKGGTIKDKWKMKKWYSIIAPKVFGEVSLGSTPAYDVTQTIGRRVETTLYDLTGDFSQVYVHLYFKIVSNEGDRLITRFVGHELSRDYLRSLIRRKSSKVNSVFDVTTKDGYVVRVKGLVLTTYKCHQSQKTAIRKIINETISKKASELTFDDFTQEVVFGRLANEIFEATKKIYPLRKAEIEKTKVLKVPENLGKQVESSSVSSG</sequence>
<protein>
    <recommendedName>
        <fullName evidence="1">Small ribosomal subunit protein eS1</fullName>
    </recommendedName>
    <alternativeName>
        <fullName evidence="2">30S ribosomal protein S3Ae</fullName>
    </alternativeName>
    <alternativeName>
        <fullName evidence="1">Ribosomal protein S1e</fullName>
    </alternativeName>
</protein>
<feature type="chain" id="PRO_1000205382" description="Small ribosomal subunit protein eS1">
    <location>
        <begin position="1"/>
        <end position="208"/>
    </location>
</feature>
<evidence type="ECO:0000255" key="1">
    <source>
        <dbReference type="HAMAP-Rule" id="MF_00359"/>
    </source>
</evidence>
<evidence type="ECO:0000305" key="2"/>
<reference key="1">
    <citation type="journal article" date="2009" name="Proc. Natl. Acad. Sci. U.S.A.">
        <title>Biogeography of the Sulfolobus islandicus pan-genome.</title>
        <authorList>
            <person name="Reno M.L."/>
            <person name="Held N.L."/>
            <person name="Fields C.J."/>
            <person name="Burke P.V."/>
            <person name="Whitaker R.J."/>
        </authorList>
    </citation>
    <scope>NUCLEOTIDE SEQUENCE [LARGE SCALE GENOMIC DNA]</scope>
    <source>
        <strain>L.S.2.15 / Lassen #1</strain>
    </source>
</reference>
<gene>
    <name evidence="1" type="primary">rps3ae</name>
    <name type="ordered locus">LS215_1491</name>
</gene>
<comment type="similarity">
    <text evidence="1">Belongs to the eukaryotic ribosomal protein eS1 family.</text>
</comment>
<accession>C3MQ36</accession>